<sequence>MTSRPLSPLAIFDLDGTLVDTAADLVSSLNHTIAAAGLAPVTYDDLTHLVGQGARVMIKRAFALRETELPEADIDPLYERFITHYRAEMPGESRPYPGIIETLDALSQAGITLAVCTNKTEILAVPLLEKLGLTRYFAAITCGDTFAFRKPDARHILGTIEKAGGDVQRSIMVGDSINDILAARNAAVPSIGVTFGYTDVPMVELEPDVVIDDFAALTPALFEKLVSKGAAAA</sequence>
<keyword id="KW-0119">Carbohydrate metabolism</keyword>
<keyword id="KW-0378">Hydrolase</keyword>
<keyword id="KW-0460">Magnesium</keyword>
<keyword id="KW-0479">Metal-binding</keyword>
<keyword id="KW-1185">Reference proteome</keyword>
<reference key="1">
    <citation type="journal article" date="2001" name="Science">
        <title>The genome of the natural genetic engineer Agrobacterium tumefaciens C58.</title>
        <authorList>
            <person name="Wood D.W."/>
            <person name="Setubal J.C."/>
            <person name="Kaul R."/>
            <person name="Monks D.E."/>
            <person name="Kitajima J.P."/>
            <person name="Okura V.K."/>
            <person name="Zhou Y."/>
            <person name="Chen L."/>
            <person name="Wood G.E."/>
            <person name="Almeida N.F. Jr."/>
            <person name="Woo L."/>
            <person name="Chen Y."/>
            <person name="Paulsen I.T."/>
            <person name="Eisen J.A."/>
            <person name="Karp P.D."/>
            <person name="Bovee D. Sr."/>
            <person name="Chapman P."/>
            <person name="Clendenning J."/>
            <person name="Deatherage G."/>
            <person name="Gillet W."/>
            <person name="Grant C."/>
            <person name="Kutyavin T."/>
            <person name="Levy R."/>
            <person name="Li M.-J."/>
            <person name="McClelland E."/>
            <person name="Palmieri A."/>
            <person name="Raymond C."/>
            <person name="Rouse G."/>
            <person name="Saenphimmachak C."/>
            <person name="Wu Z."/>
            <person name="Romero P."/>
            <person name="Gordon D."/>
            <person name="Zhang S."/>
            <person name="Yoo H."/>
            <person name="Tao Y."/>
            <person name="Biddle P."/>
            <person name="Jung M."/>
            <person name="Krespan W."/>
            <person name="Perry M."/>
            <person name="Gordon-Kamm B."/>
            <person name="Liao L."/>
            <person name="Kim S."/>
            <person name="Hendrick C."/>
            <person name="Zhao Z.-Y."/>
            <person name="Dolan M."/>
            <person name="Chumley F."/>
            <person name="Tingey S.V."/>
            <person name="Tomb J.-F."/>
            <person name="Gordon M.P."/>
            <person name="Olson M.V."/>
            <person name="Nester E.W."/>
        </authorList>
    </citation>
    <scope>NUCLEOTIDE SEQUENCE [LARGE SCALE GENOMIC DNA]</scope>
    <source>
        <strain>C58 / ATCC 33970</strain>
    </source>
</reference>
<reference key="2">
    <citation type="journal article" date="2001" name="Science">
        <title>Genome sequence of the plant pathogen and biotechnology agent Agrobacterium tumefaciens C58.</title>
        <authorList>
            <person name="Goodner B."/>
            <person name="Hinkle G."/>
            <person name="Gattung S."/>
            <person name="Miller N."/>
            <person name="Blanchard M."/>
            <person name="Qurollo B."/>
            <person name="Goldman B.S."/>
            <person name="Cao Y."/>
            <person name="Askenazi M."/>
            <person name="Halling C."/>
            <person name="Mullin L."/>
            <person name="Houmiel K."/>
            <person name="Gordon J."/>
            <person name="Vaudin M."/>
            <person name="Iartchouk O."/>
            <person name="Epp A."/>
            <person name="Liu F."/>
            <person name="Wollam C."/>
            <person name="Allinger M."/>
            <person name="Doughty D."/>
            <person name="Scott C."/>
            <person name="Lappas C."/>
            <person name="Markelz B."/>
            <person name="Flanagan C."/>
            <person name="Crowell C."/>
            <person name="Gurson J."/>
            <person name="Lomo C."/>
            <person name="Sear C."/>
            <person name="Strub G."/>
            <person name="Cielo C."/>
            <person name="Slater S."/>
        </authorList>
    </citation>
    <scope>NUCLEOTIDE SEQUENCE [LARGE SCALE GENOMIC DNA]</scope>
    <source>
        <strain>C58 / ATCC 33970</strain>
    </source>
</reference>
<proteinExistence type="inferred from homology"/>
<feature type="chain" id="PRO_0000108022" description="Phosphoglycolate phosphatase">
    <location>
        <begin position="1"/>
        <end position="233"/>
    </location>
</feature>
<feature type="active site" description="Nucleophile" evidence="1">
    <location>
        <position position="13"/>
    </location>
</feature>
<feature type="binding site" evidence="1">
    <location>
        <position position="13"/>
    </location>
    <ligand>
        <name>Mg(2+)</name>
        <dbReference type="ChEBI" id="CHEBI:18420"/>
    </ligand>
</feature>
<feature type="binding site" evidence="1">
    <location>
        <position position="15"/>
    </location>
    <ligand>
        <name>Mg(2+)</name>
        <dbReference type="ChEBI" id="CHEBI:18420"/>
    </ligand>
</feature>
<feature type="binding site" evidence="1">
    <location>
        <position position="175"/>
    </location>
    <ligand>
        <name>Mg(2+)</name>
        <dbReference type="ChEBI" id="CHEBI:18420"/>
    </ligand>
</feature>
<gene>
    <name evidence="1" type="primary">gph</name>
    <name type="ordered locus">Atu1614</name>
    <name type="ORF">AGR_C_2974</name>
</gene>
<accession>Q8UEY9</accession>
<comment type="function">
    <text evidence="1">Specifically catalyzes the dephosphorylation of 2-phosphoglycolate. Is involved in the dissimilation of the intracellular 2-phosphoglycolate formed during the DNA repair of 3'-phosphoglycolate ends, a major class of DNA lesions induced by oxidative stress.</text>
</comment>
<comment type="catalytic activity">
    <reaction evidence="1">
        <text>2-phosphoglycolate + H2O = glycolate + phosphate</text>
        <dbReference type="Rhea" id="RHEA:14369"/>
        <dbReference type="ChEBI" id="CHEBI:15377"/>
        <dbReference type="ChEBI" id="CHEBI:29805"/>
        <dbReference type="ChEBI" id="CHEBI:43474"/>
        <dbReference type="ChEBI" id="CHEBI:58033"/>
        <dbReference type="EC" id="3.1.3.18"/>
    </reaction>
</comment>
<comment type="cofactor">
    <cofactor evidence="1">
        <name>Mg(2+)</name>
        <dbReference type="ChEBI" id="CHEBI:18420"/>
    </cofactor>
</comment>
<comment type="pathway">
    <text evidence="1">Organic acid metabolism; glycolate biosynthesis; glycolate from 2-phosphoglycolate: step 1/1.</text>
</comment>
<comment type="similarity">
    <text evidence="1">Belongs to the HAD-like hydrolase superfamily. CbbY/CbbZ/Gph/YieH family.</text>
</comment>
<organism>
    <name type="scientific">Agrobacterium fabrum (strain C58 / ATCC 33970)</name>
    <name type="common">Agrobacterium tumefaciens (strain C58)</name>
    <dbReference type="NCBI Taxonomy" id="176299"/>
    <lineage>
        <taxon>Bacteria</taxon>
        <taxon>Pseudomonadati</taxon>
        <taxon>Pseudomonadota</taxon>
        <taxon>Alphaproteobacteria</taxon>
        <taxon>Hyphomicrobiales</taxon>
        <taxon>Rhizobiaceae</taxon>
        <taxon>Rhizobium/Agrobacterium group</taxon>
        <taxon>Agrobacterium</taxon>
        <taxon>Agrobacterium tumefaciens complex</taxon>
    </lineage>
</organism>
<protein>
    <recommendedName>
        <fullName evidence="1">Phosphoglycolate phosphatase</fullName>
        <shortName evidence="1">PGP</shortName>
        <shortName evidence="1">PGPase</shortName>
        <ecNumber evidence="1">3.1.3.18</ecNumber>
    </recommendedName>
</protein>
<dbReference type="EC" id="3.1.3.18" evidence="1"/>
<dbReference type="EMBL" id="AE007869">
    <property type="protein sequence ID" value="AAK87393.2"/>
    <property type="molecule type" value="Genomic_DNA"/>
</dbReference>
<dbReference type="PIR" id="AB2775">
    <property type="entry name" value="AB2775"/>
</dbReference>
<dbReference type="PIR" id="H97554">
    <property type="entry name" value="H97554"/>
</dbReference>
<dbReference type="RefSeq" id="NP_354608.2">
    <property type="nucleotide sequence ID" value="NC_003062.2"/>
</dbReference>
<dbReference type="RefSeq" id="WP_010971741.1">
    <property type="nucleotide sequence ID" value="NC_003062.2"/>
</dbReference>
<dbReference type="SMR" id="Q8UEY9"/>
<dbReference type="STRING" id="176299.Atu1614"/>
<dbReference type="EnsemblBacteria" id="AAK87393">
    <property type="protein sequence ID" value="AAK87393"/>
    <property type="gene ID" value="Atu1614"/>
</dbReference>
<dbReference type="GeneID" id="1133652"/>
<dbReference type="KEGG" id="atu:Atu1614"/>
<dbReference type="PATRIC" id="fig|176299.10.peg.1632"/>
<dbReference type="eggNOG" id="COG0546">
    <property type="taxonomic scope" value="Bacteria"/>
</dbReference>
<dbReference type="HOGENOM" id="CLU_045011_19_1_5"/>
<dbReference type="OrthoDB" id="9793014at2"/>
<dbReference type="PhylomeDB" id="Q8UEY9"/>
<dbReference type="BioCyc" id="AGRO:ATU1614-MONOMER"/>
<dbReference type="UniPathway" id="UPA00865">
    <property type="reaction ID" value="UER00834"/>
</dbReference>
<dbReference type="Proteomes" id="UP000000813">
    <property type="component" value="Chromosome circular"/>
</dbReference>
<dbReference type="GO" id="GO:0005829">
    <property type="term" value="C:cytosol"/>
    <property type="evidence" value="ECO:0007669"/>
    <property type="project" value="TreeGrafter"/>
</dbReference>
<dbReference type="GO" id="GO:0046872">
    <property type="term" value="F:metal ion binding"/>
    <property type="evidence" value="ECO:0007669"/>
    <property type="project" value="UniProtKB-KW"/>
</dbReference>
<dbReference type="GO" id="GO:0008967">
    <property type="term" value="F:phosphoglycolate phosphatase activity"/>
    <property type="evidence" value="ECO:0007669"/>
    <property type="project" value="UniProtKB-UniRule"/>
</dbReference>
<dbReference type="GO" id="GO:0005975">
    <property type="term" value="P:carbohydrate metabolic process"/>
    <property type="evidence" value="ECO:0007669"/>
    <property type="project" value="InterPro"/>
</dbReference>
<dbReference type="GO" id="GO:0006281">
    <property type="term" value="P:DNA repair"/>
    <property type="evidence" value="ECO:0007669"/>
    <property type="project" value="TreeGrafter"/>
</dbReference>
<dbReference type="GO" id="GO:0046295">
    <property type="term" value="P:glycolate biosynthetic process"/>
    <property type="evidence" value="ECO:0007669"/>
    <property type="project" value="UniProtKB-UniRule"/>
</dbReference>
<dbReference type="CDD" id="cd07512">
    <property type="entry name" value="HAD_PGPase"/>
    <property type="match status" value="1"/>
</dbReference>
<dbReference type="FunFam" id="3.40.50.1000:FF:000022">
    <property type="entry name" value="Phosphoglycolate phosphatase"/>
    <property type="match status" value="1"/>
</dbReference>
<dbReference type="Gene3D" id="3.40.50.1000">
    <property type="entry name" value="HAD superfamily/HAD-like"/>
    <property type="match status" value="1"/>
</dbReference>
<dbReference type="Gene3D" id="1.10.150.240">
    <property type="entry name" value="Putative phosphatase, domain 2"/>
    <property type="match status" value="1"/>
</dbReference>
<dbReference type="HAMAP" id="MF_00495">
    <property type="entry name" value="GPH_hydrolase_bact"/>
    <property type="match status" value="1"/>
</dbReference>
<dbReference type="InterPro" id="IPR050155">
    <property type="entry name" value="HAD-like_hydrolase_sf"/>
</dbReference>
<dbReference type="InterPro" id="IPR036412">
    <property type="entry name" value="HAD-like_sf"/>
</dbReference>
<dbReference type="InterPro" id="IPR006439">
    <property type="entry name" value="HAD-SF_hydro_IA"/>
</dbReference>
<dbReference type="InterPro" id="IPR041492">
    <property type="entry name" value="HAD_2"/>
</dbReference>
<dbReference type="InterPro" id="IPR023214">
    <property type="entry name" value="HAD_sf"/>
</dbReference>
<dbReference type="InterPro" id="IPR023198">
    <property type="entry name" value="PGP-like_dom2"/>
</dbReference>
<dbReference type="InterPro" id="IPR037512">
    <property type="entry name" value="PGPase_prok"/>
</dbReference>
<dbReference type="NCBIfam" id="TIGR01549">
    <property type="entry name" value="HAD-SF-IA-v1"/>
    <property type="match status" value="1"/>
</dbReference>
<dbReference type="NCBIfam" id="TIGR01509">
    <property type="entry name" value="HAD-SF-IA-v3"/>
    <property type="match status" value="1"/>
</dbReference>
<dbReference type="PANTHER" id="PTHR43434">
    <property type="entry name" value="PHOSPHOGLYCOLATE PHOSPHATASE"/>
    <property type="match status" value="1"/>
</dbReference>
<dbReference type="PANTHER" id="PTHR43434:SF1">
    <property type="entry name" value="PHOSPHOGLYCOLATE PHOSPHATASE"/>
    <property type="match status" value="1"/>
</dbReference>
<dbReference type="Pfam" id="PF13419">
    <property type="entry name" value="HAD_2"/>
    <property type="match status" value="1"/>
</dbReference>
<dbReference type="SFLD" id="SFLDG01135">
    <property type="entry name" value="C1.5.6:_HAD__Beta-PGM__Phospha"/>
    <property type="match status" value="1"/>
</dbReference>
<dbReference type="SFLD" id="SFLDG01129">
    <property type="entry name" value="C1.5:_HAD__Beta-PGM__Phosphata"/>
    <property type="match status" value="1"/>
</dbReference>
<dbReference type="SUPFAM" id="SSF56784">
    <property type="entry name" value="HAD-like"/>
    <property type="match status" value="1"/>
</dbReference>
<evidence type="ECO:0000255" key="1">
    <source>
        <dbReference type="HAMAP-Rule" id="MF_00495"/>
    </source>
</evidence>
<name>GPH_AGRFC</name>